<sequence>MNNIYQEDLGLQQYTKVFEDMLEFTSTRTPETNDEIWLVEHPAVFTQGKHGKPEHILNSHNIPIVATDRGGQVTYHGPGQAVIYFLLDIKRNKLGAKKLVTTVEQACINMLDKYYNLKAHIIDGAHGIYINNQKIASLGLRIKQGKSYHGIAINTNMDLTPFSYINPCGYSGLKMCQLANFYQEADIKKVQQQYTAEFVTLLNNSI</sequence>
<comment type="function">
    <text evidence="1">Catalyzes the transfer of endogenously produced octanoic acid from octanoyl-acyl-carrier-protein onto the lipoyl domains of lipoate-dependent enzymes. Lipoyl-ACP can also act as a substrate although octanoyl-ACP is likely to be the physiological substrate.</text>
</comment>
<comment type="catalytic activity">
    <reaction evidence="1">
        <text>octanoyl-[ACP] + L-lysyl-[protein] = N(6)-octanoyl-L-lysyl-[protein] + holo-[ACP] + H(+)</text>
        <dbReference type="Rhea" id="RHEA:17665"/>
        <dbReference type="Rhea" id="RHEA-COMP:9636"/>
        <dbReference type="Rhea" id="RHEA-COMP:9685"/>
        <dbReference type="Rhea" id="RHEA-COMP:9752"/>
        <dbReference type="Rhea" id="RHEA-COMP:9928"/>
        <dbReference type="ChEBI" id="CHEBI:15378"/>
        <dbReference type="ChEBI" id="CHEBI:29969"/>
        <dbReference type="ChEBI" id="CHEBI:64479"/>
        <dbReference type="ChEBI" id="CHEBI:78463"/>
        <dbReference type="ChEBI" id="CHEBI:78809"/>
        <dbReference type="EC" id="2.3.1.181"/>
    </reaction>
</comment>
<comment type="pathway">
    <text evidence="1">Protein modification; protein lipoylation via endogenous pathway; protein N(6)-(lipoyl)lysine from octanoyl-[acyl-carrier-protein]: step 1/2.</text>
</comment>
<comment type="subcellular location">
    <subcellularLocation>
        <location evidence="1">Cytoplasm</location>
    </subcellularLocation>
</comment>
<comment type="miscellaneous">
    <text evidence="1">In the reaction, the free carboxyl group of octanoic acid is attached via an amide linkage to the epsilon-amino group of a specific lysine residue of lipoyl domains of lipoate-dependent enzymes.</text>
</comment>
<comment type="similarity">
    <text evidence="1">Belongs to the LipB family.</text>
</comment>
<name>LIPB_FRATM</name>
<protein>
    <recommendedName>
        <fullName evidence="1">Octanoyltransferase</fullName>
        <ecNumber evidence="1">2.3.1.181</ecNumber>
    </recommendedName>
    <alternativeName>
        <fullName evidence="1">Lipoate-protein ligase B</fullName>
    </alternativeName>
    <alternativeName>
        <fullName evidence="1">Lipoyl/octanoyl transferase</fullName>
    </alternativeName>
    <alternativeName>
        <fullName evidence="1">Octanoyl-[acyl-carrier-protein]-protein N-octanoyltransferase</fullName>
    </alternativeName>
</protein>
<organism>
    <name type="scientific">Francisella tularensis subsp. mediasiatica (strain FSC147)</name>
    <dbReference type="NCBI Taxonomy" id="441952"/>
    <lineage>
        <taxon>Bacteria</taxon>
        <taxon>Pseudomonadati</taxon>
        <taxon>Pseudomonadota</taxon>
        <taxon>Gammaproteobacteria</taxon>
        <taxon>Thiotrichales</taxon>
        <taxon>Francisellaceae</taxon>
        <taxon>Francisella</taxon>
    </lineage>
</organism>
<proteinExistence type="inferred from homology"/>
<accession>B2SGJ2</accession>
<keyword id="KW-0012">Acyltransferase</keyword>
<keyword id="KW-0963">Cytoplasm</keyword>
<keyword id="KW-0808">Transferase</keyword>
<dbReference type="EC" id="2.3.1.181" evidence="1"/>
<dbReference type="EMBL" id="CP000915">
    <property type="protein sequence ID" value="ACD30851.1"/>
    <property type="molecule type" value="Genomic_DNA"/>
</dbReference>
<dbReference type="SMR" id="B2SGJ2"/>
<dbReference type="KEGG" id="ftm:FTM_0919"/>
<dbReference type="HOGENOM" id="CLU_035168_3_1_6"/>
<dbReference type="UniPathway" id="UPA00538">
    <property type="reaction ID" value="UER00592"/>
</dbReference>
<dbReference type="GO" id="GO:0005737">
    <property type="term" value="C:cytoplasm"/>
    <property type="evidence" value="ECO:0007669"/>
    <property type="project" value="UniProtKB-SubCell"/>
</dbReference>
<dbReference type="GO" id="GO:0033819">
    <property type="term" value="F:lipoyl(octanoyl) transferase activity"/>
    <property type="evidence" value="ECO:0007669"/>
    <property type="project" value="UniProtKB-EC"/>
</dbReference>
<dbReference type="GO" id="GO:0036211">
    <property type="term" value="P:protein modification process"/>
    <property type="evidence" value="ECO:0007669"/>
    <property type="project" value="InterPro"/>
</dbReference>
<dbReference type="CDD" id="cd16444">
    <property type="entry name" value="LipB"/>
    <property type="match status" value="1"/>
</dbReference>
<dbReference type="FunFam" id="3.30.930.10:FF:000020">
    <property type="entry name" value="Octanoyltransferase"/>
    <property type="match status" value="1"/>
</dbReference>
<dbReference type="Gene3D" id="3.30.930.10">
    <property type="entry name" value="Bira Bifunctional Protein, Domain 2"/>
    <property type="match status" value="1"/>
</dbReference>
<dbReference type="HAMAP" id="MF_00013">
    <property type="entry name" value="LipB"/>
    <property type="match status" value="1"/>
</dbReference>
<dbReference type="InterPro" id="IPR045864">
    <property type="entry name" value="aa-tRNA-synth_II/BPL/LPL"/>
</dbReference>
<dbReference type="InterPro" id="IPR004143">
    <property type="entry name" value="BPL_LPL_catalytic"/>
</dbReference>
<dbReference type="InterPro" id="IPR000544">
    <property type="entry name" value="Octanoyltransferase"/>
</dbReference>
<dbReference type="InterPro" id="IPR020605">
    <property type="entry name" value="Octanoyltransferase_CS"/>
</dbReference>
<dbReference type="NCBIfam" id="TIGR00214">
    <property type="entry name" value="lipB"/>
    <property type="match status" value="1"/>
</dbReference>
<dbReference type="NCBIfam" id="NF010922">
    <property type="entry name" value="PRK14342.1"/>
    <property type="match status" value="1"/>
</dbReference>
<dbReference type="PANTHER" id="PTHR10993:SF7">
    <property type="entry name" value="LIPOYLTRANSFERASE 2, MITOCHONDRIAL-RELATED"/>
    <property type="match status" value="1"/>
</dbReference>
<dbReference type="PANTHER" id="PTHR10993">
    <property type="entry name" value="OCTANOYLTRANSFERASE"/>
    <property type="match status" value="1"/>
</dbReference>
<dbReference type="Pfam" id="PF21948">
    <property type="entry name" value="LplA-B_cat"/>
    <property type="match status" value="1"/>
</dbReference>
<dbReference type="PIRSF" id="PIRSF016262">
    <property type="entry name" value="LPLase"/>
    <property type="match status" value="1"/>
</dbReference>
<dbReference type="SUPFAM" id="SSF55681">
    <property type="entry name" value="Class II aaRS and biotin synthetases"/>
    <property type="match status" value="1"/>
</dbReference>
<dbReference type="PROSITE" id="PS51733">
    <property type="entry name" value="BPL_LPL_CATALYTIC"/>
    <property type="match status" value="1"/>
</dbReference>
<dbReference type="PROSITE" id="PS01313">
    <property type="entry name" value="LIPB"/>
    <property type="match status" value="1"/>
</dbReference>
<feature type="chain" id="PRO_1000089458" description="Octanoyltransferase">
    <location>
        <begin position="1"/>
        <end position="206"/>
    </location>
</feature>
<feature type="domain" description="BPL/LPL catalytic" evidence="2">
    <location>
        <begin position="30"/>
        <end position="206"/>
    </location>
</feature>
<feature type="active site" description="Acyl-thioester intermediate" evidence="1">
    <location>
        <position position="168"/>
    </location>
</feature>
<feature type="binding site" evidence="1">
    <location>
        <begin position="69"/>
        <end position="76"/>
    </location>
    <ligand>
        <name>substrate</name>
    </ligand>
</feature>
<feature type="binding site" evidence="1">
    <location>
        <begin position="137"/>
        <end position="139"/>
    </location>
    <ligand>
        <name>substrate</name>
    </ligand>
</feature>
<feature type="binding site" evidence="1">
    <location>
        <begin position="150"/>
        <end position="152"/>
    </location>
    <ligand>
        <name>substrate</name>
    </ligand>
</feature>
<feature type="site" description="Lowers pKa of active site Cys" evidence="1">
    <location>
        <position position="134"/>
    </location>
</feature>
<gene>
    <name evidence="1" type="primary">lipB</name>
    <name type="ordered locus">FTM_0919</name>
</gene>
<evidence type="ECO:0000255" key="1">
    <source>
        <dbReference type="HAMAP-Rule" id="MF_00013"/>
    </source>
</evidence>
<evidence type="ECO:0000255" key="2">
    <source>
        <dbReference type="PROSITE-ProRule" id="PRU01067"/>
    </source>
</evidence>
<reference key="1">
    <citation type="journal article" date="2009" name="PLoS Pathog.">
        <title>Molecular evolutionary consequences of niche restriction in Francisella tularensis, a facultative intracellular pathogen.</title>
        <authorList>
            <person name="Larsson P."/>
            <person name="Elfsmark D."/>
            <person name="Svensson K."/>
            <person name="Wikstroem P."/>
            <person name="Forsman M."/>
            <person name="Brettin T."/>
            <person name="Keim P."/>
            <person name="Johansson A."/>
        </authorList>
    </citation>
    <scope>NUCLEOTIDE SEQUENCE [LARGE SCALE GENOMIC DNA]</scope>
    <source>
        <strain>FSC147</strain>
    </source>
</reference>